<dbReference type="EMBL" id="CP000524">
    <property type="protein sequence ID" value="ABM45300.1"/>
    <property type="molecule type" value="Genomic_DNA"/>
</dbReference>
<dbReference type="RefSeq" id="WP_005768122.1">
    <property type="nucleotide sequence ID" value="NC_008783.1"/>
</dbReference>
<dbReference type="SMR" id="A1UUC9"/>
<dbReference type="STRING" id="360095.BARBAKC583_1334"/>
<dbReference type="GeneID" id="4685155"/>
<dbReference type="KEGG" id="bbk:BARBAKC583_1334"/>
<dbReference type="PATRIC" id="fig|360095.6.peg.1306"/>
<dbReference type="eggNOG" id="COG0576">
    <property type="taxonomic scope" value="Bacteria"/>
</dbReference>
<dbReference type="HOGENOM" id="CLU_057217_6_2_5"/>
<dbReference type="OrthoDB" id="9789811at2"/>
<dbReference type="Proteomes" id="UP000000643">
    <property type="component" value="Chromosome"/>
</dbReference>
<dbReference type="GO" id="GO:0005737">
    <property type="term" value="C:cytoplasm"/>
    <property type="evidence" value="ECO:0007669"/>
    <property type="project" value="UniProtKB-SubCell"/>
</dbReference>
<dbReference type="GO" id="GO:0000774">
    <property type="term" value="F:adenyl-nucleotide exchange factor activity"/>
    <property type="evidence" value="ECO:0007669"/>
    <property type="project" value="InterPro"/>
</dbReference>
<dbReference type="GO" id="GO:0042803">
    <property type="term" value="F:protein homodimerization activity"/>
    <property type="evidence" value="ECO:0007669"/>
    <property type="project" value="InterPro"/>
</dbReference>
<dbReference type="GO" id="GO:0051087">
    <property type="term" value="F:protein-folding chaperone binding"/>
    <property type="evidence" value="ECO:0007669"/>
    <property type="project" value="InterPro"/>
</dbReference>
<dbReference type="GO" id="GO:0051082">
    <property type="term" value="F:unfolded protein binding"/>
    <property type="evidence" value="ECO:0007669"/>
    <property type="project" value="TreeGrafter"/>
</dbReference>
<dbReference type="GO" id="GO:0006457">
    <property type="term" value="P:protein folding"/>
    <property type="evidence" value="ECO:0007669"/>
    <property type="project" value="InterPro"/>
</dbReference>
<dbReference type="CDD" id="cd00446">
    <property type="entry name" value="GrpE"/>
    <property type="match status" value="1"/>
</dbReference>
<dbReference type="FunFam" id="2.30.22.10:FF:000001">
    <property type="entry name" value="Protein GrpE"/>
    <property type="match status" value="1"/>
</dbReference>
<dbReference type="Gene3D" id="3.90.20.20">
    <property type="match status" value="1"/>
</dbReference>
<dbReference type="Gene3D" id="2.30.22.10">
    <property type="entry name" value="Head domain of nucleotide exchange factor GrpE"/>
    <property type="match status" value="1"/>
</dbReference>
<dbReference type="HAMAP" id="MF_01151">
    <property type="entry name" value="GrpE"/>
    <property type="match status" value="1"/>
</dbReference>
<dbReference type="InterPro" id="IPR000740">
    <property type="entry name" value="GrpE"/>
</dbReference>
<dbReference type="InterPro" id="IPR013805">
    <property type="entry name" value="GrpE_coiled_coil"/>
</dbReference>
<dbReference type="InterPro" id="IPR009012">
    <property type="entry name" value="GrpE_head"/>
</dbReference>
<dbReference type="NCBIfam" id="NF010738">
    <property type="entry name" value="PRK14140.1"/>
    <property type="match status" value="1"/>
</dbReference>
<dbReference type="NCBIfam" id="NF010739">
    <property type="entry name" value="PRK14141.1"/>
    <property type="match status" value="1"/>
</dbReference>
<dbReference type="NCBIfam" id="NF010748">
    <property type="entry name" value="PRK14150.1"/>
    <property type="match status" value="1"/>
</dbReference>
<dbReference type="PANTHER" id="PTHR21237">
    <property type="entry name" value="GRPE PROTEIN"/>
    <property type="match status" value="1"/>
</dbReference>
<dbReference type="PANTHER" id="PTHR21237:SF23">
    <property type="entry name" value="GRPE PROTEIN HOMOLOG, MITOCHONDRIAL"/>
    <property type="match status" value="1"/>
</dbReference>
<dbReference type="Pfam" id="PF01025">
    <property type="entry name" value="GrpE"/>
    <property type="match status" value="1"/>
</dbReference>
<dbReference type="PRINTS" id="PR00773">
    <property type="entry name" value="GRPEPROTEIN"/>
</dbReference>
<dbReference type="SUPFAM" id="SSF58014">
    <property type="entry name" value="Coiled-coil domain of nucleotide exchange factor GrpE"/>
    <property type="match status" value="1"/>
</dbReference>
<dbReference type="SUPFAM" id="SSF51064">
    <property type="entry name" value="Head domain of nucleotide exchange factor GrpE"/>
    <property type="match status" value="1"/>
</dbReference>
<dbReference type="PROSITE" id="PS01071">
    <property type="entry name" value="GRPE"/>
    <property type="match status" value="1"/>
</dbReference>
<keyword id="KW-0143">Chaperone</keyword>
<keyword id="KW-0963">Cytoplasm</keyword>
<keyword id="KW-0346">Stress response</keyword>
<protein>
    <recommendedName>
        <fullName evidence="1">Protein GrpE</fullName>
    </recommendedName>
    <alternativeName>
        <fullName evidence="1">HSP-70 cofactor</fullName>
    </alternativeName>
</protein>
<feature type="chain" id="PRO_1000164176" description="Protein GrpE">
    <location>
        <begin position="1"/>
        <end position="222"/>
    </location>
</feature>
<reference key="1">
    <citation type="submission" date="2006-12" db="EMBL/GenBank/DDBJ databases">
        <authorList>
            <person name="Hendrix L."/>
            <person name="Mohamoud Y."/>
            <person name="Radune D."/>
            <person name="Shvartsbeyn A."/>
            <person name="Daugherty S."/>
            <person name="Dodson R."/>
            <person name="Durkin A.S."/>
            <person name="Harkins D."/>
            <person name="Huot H."/>
            <person name="Kothari S.P."/>
            <person name="Madupu R."/>
            <person name="Li J."/>
            <person name="Nelson W.C."/>
            <person name="Shrivastava S."/>
            <person name="Giglio M.G."/>
            <person name="Haft D."/>
            <person name="Selengut J."/>
            <person name="Fraser-Ligget C."/>
            <person name="Seshadri R."/>
        </authorList>
    </citation>
    <scope>NUCLEOTIDE SEQUENCE [LARGE SCALE GENOMIC DNA]</scope>
    <source>
        <strain>ATCC 35685 / KC583 / Herrer 020/F12,63</strain>
    </source>
</reference>
<accession>A1UUC9</accession>
<organism>
    <name type="scientific">Bartonella bacilliformis (strain ATCC 35685 / KC583 / Herrer 020/F12,63)</name>
    <dbReference type="NCBI Taxonomy" id="360095"/>
    <lineage>
        <taxon>Bacteria</taxon>
        <taxon>Pseudomonadati</taxon>
        <taxon>Pseudomonadota</taxon>
        <taxon>Alphaproteobacteria</taxon>
        <taxon>Hyphomicrobiales</taxon>
        <taxon>Bartonellaceae</taxon>
        <taxon>Bartonella</taxon>
    </lineage>
</organism>
<comment type="function">
    <text evidence="1">Participates actively in the response to hyperosmotic and heat shock by preventing the aggregation of stress-denatured proteins, in association with DnaK and GrpE. It is the nucleotide exchange factor for DnaK and may function as a thermosensor. Unfolded proteins bind initially to DnaJ; upon interaction with the DnaJ-bound protein, DnaK hydrolyzes its bound ATP, resulting in the formation of a stable complex. GrpE releases ADP from DnaK; ATP binding to DnaK triggers the release of the substrate protein, thus completing the reaction cycle. Several rounds of ATP-dependent interactions between DnaJ, DnaK and GrpE are required for fully efficient folding.</text>
</comment>
<comment type="subunit">
    <text evidence="1">Homodimer.</text>
</comment>
<comment type="subcellular location">
    <subcellularLocation>
        <location evidence="1">Cytoplasm</location>
    </subcellularLocation>
</comment>
<comment type="similarity">
    <text evidence="1">Belongs to the GrpE family.</text>
</comment>
<sequence>MFDEKNKFTDASFENCDLKNPADRDTLKQAADELLKMHRGKEEVCADVEEEKNESTDLLATLQDENKELKDQFLRLAADMENLRRRTIRDVADAKIYSIANFARDMLSVSDNLNRALEAIPADARESDTNLKMLAEGVEMTERAMMAALEHHGVKKICPEGQKFDPNFHQAMFEISNSDVPDNTVQQVVQAGYIIGERVLRPAMVGVAKGGPKENSTEADSA</sequence>
<gene>
    <name evidence="1" type="primary">grpE</name>
    <name type="ordered locus">BARBAKC583_1334</name>
</gene>
<evidence type="ECO:0000255" key="1">
    <source>
        <dbReference type="HAMAP-Rule" id="MF_01151"/>
    </source>
</evidence>
<proteinExistence type="inferred from homology"/>
<name>GRPE_BARBK</name>